<protein>
    <recommendedName>
        <fullName evidence="3">Periviscerokinin-3</fullName>
        <shortName evidence="3">PanSp-PVK-3</shortName>
    </recommendedName>
</protein>
<evidence type="ECO:0000255" key="1"/>
<evidence type="ECO:0000269" key="2">
    <source>
    </source>
</evidence>
<evidence type="ECO:0000303" key="3">
    <source>
    </source>
</evidence>
<evidence type="ECO:0000305" key="4"/>
<feature type="peptide" id="PRO_0000378844" description="Periviscerokinin-3" evidence="2">
    <location>
        <begin position="1"/>
        <end position="11"/>
    </location>
</feature>
<feature type="modified residue" description="Valine amide" evidence="2">
    <location>
        <position position="11"/>
    </location>
</feature>
<organism>
    <name type="scientific">Panchlora sp. (strain SR-2005)</name>
    <name type="common">Cockroach</name>
    <dbReference type="NCBI Taxonomy" id="348758"/>
    <lineage>
        <taxon>Eukaryota</taxon>
        <taxon>Metazoa</taxon>
        <taxon>Ecdysozoa</taxon>
        <taxon>Arthropoda</taxon>
        <taxon>Hexapoda</taxon>
        <taxon>Insecta</taxon>
        <taxon>Pterygota</taxon>
        <taxon>Neoptera</taxon>
        <taxon>Polyneoptera</taxon>
        <taxon>Dictyoptera</taxon>
        <taxon>Blattodea</taxon>
        <taxon>Blaberoidea</taxon>
        <taxon>Blaberidae</taxon>
        <taxon>Panchlorinae</taxon>
        <taxon>Panchlora</taxon>
    </lineage>
</organism>
<keyword id="KW-0027">Amidation</keyword>
<keyword id="KW-0903">Direct protein sequencing</keyword>
<keyword id="KW-0527">Neuropeptide</keyword>
<keyword id="KW-0964">Secreted</keyword>
<sequence>GSSGMIPFPRV</sequence>
<name>PVK3_PANSS</name>
<reference evidence="4" key="1">
    <citation type="journal article" date="2009" name="BMC Evol. Biol.">
        <title>A proteomic approach for studying insect phylogeny: CAPA peptides of ancient insect taxa (Dictyoptera, Blattoptera) as a test case.</title>
        <authorList>
            <person name="Roth S."/>
            <person name="Fromm B."/>
            <person name="Gaede G."/>
            <person name="Predel R."/>
        </authorList>
    </citation>
    <scope>PROTEIN SEQUENCE</scope>
    <scope>AMIDATION AT VAL-11</scope>
    <source>
        <tissue evidence="2">Abdominal perisympathetic organs</tissue>
    </source>
</reference>
<proteinExistence type="evidence at protein level"/>
<dbReference type="GO" id="GO:0005576">
    <property type="term" value="C:extracellular region"/>
    <property type="evidence" value="ECO:0007669"/>
    <property type="project" value="UniProtKB-SubCell"/>
</dbReference>
<dbReference type="GO" id="GO:0007218">
    <property type="term" value="P:neuropeptide signaling pathway"/>
    <property type="evidence" value="ECO:0007669"/>
    <property type="project" value="UniProtKB-KW"/>
</dbReference>
<dbReference type="InterPro" id="IPR013231">
    <property type="entry name" value="Periviscerokinin"/>
</dbReference>
<dbReference type="Pfam" id="PF08259">
    <property type="entry name" value="Periviscerokin"/>
    <property type="match status" value="1"/>
</dbReference>
<accession>P85695</accession>
<comment type="function">
    <text evidence="4">Mediates visceral muscle contractile activity (myotropic activity).</text>
</comment>
<comment type="subcellular location">
    <subcellularLocation>
        <location evidence="4">Secreted</location>
    </subcellularLocation>
</comment>
<comment type="similarity">
    <text evidence="1">Belongs to the periviscerokinin family.</text>
</comment>